<gene>
    <name type="primary">1</name>
</gene>
<proteinExistence type="evidence at protein level"/>
<feature type="chain" id="PRO_0000164948" description="Deoxynucleotide monophosphate kinase">
    <location>
        <begin position="1"/>
        <end position="241"/>
    </location>
</feature>
<feature type="binding site" evidence="5 8">
    <location>
        <position position="10"/>
    </location>
    <ligand>
        <name>dGMP</name>
        <dbReference type="ChEBI" id="CHEBI:57673"/>
    </ligand>
</feature>
<feature type="binding site" evidence="7 9">
    <location>
        <position position="11"/>
    </location>
    <ligand>
        <name>ATP</name>
        <dbReference type="ChEBI" id="CHEBI:30616"/>
    </ligand>
</feature>
<feature type="binding site" evidence="7 9">
    <location>
        <position position="13"/>
    </location>
    <ligand>
        <name>ATP</name>
        <dbReference type="ChEBI" id="CHEBI:30616"/>
    </ligand>
</feature>
<feature type="binding site" evidence="7 9">
    <location>
        <position position="15"/>
    </location>
    <ligand>
        <name>ATP</name>
        <dbReference type="ChEBI" id="CHEBI:30616"/>
    </ligand>
</feature>
<feature type="binding site" evidence="7 9">
    <location>
        <position position="16"/>
    </location>
    <ligand>
        <name>ATP</name>
        <dbReference type="ChEBI" id="CHEBI:30616"/>
    </ligand>
</feature>
<feature type="binding site" evidence="5 8 9">
    <location>
        <position position="36"/>
    </location>
    <ligand>
        <name>dGMP</name>
        <dbReference type="ChEBI" id="CHEBI:57673"/>
    </ligand>
</feature>
<feature type="binding site" evidence="5 8 9">
    <location>
        <position position="37"/>
    </location>
    <ligand>
        <name>dGMP</name>
        <dbReference type="ChEBI" id="CHEBI:57673"/>
    </ligand>
</feature>
<feature type="binding site" evidence="5 8 9">
    <location>
        <position position="42"/>
    </location>
    <ligand>
        <name>Mg(2+)</name>
        <dbReference type="ChEBI" id="CHEBI:18420"/>
        <label>1</label>
    </ligand>
</feature>
<feature type="binding site" evidence="5 8 9">
    <location>
        <position position="68"/>
    </location>
    <ligand>
        <name>dGMP</name>
        <dbReference type="ChEBI" id="CHEBI:57673"/>
    </ligand>
</feature>
<feature type="binding site" evidence="5 8 9">
    <location>
        <position position="85"/>
    </location>
    <ligand>
        <name>Mg(2+)</name>
        <dbReference type="ChEBI" id="CHEBI:18420"/>
        <label>1</label>
    </ligand>
</feature>
<feature type="binding site" evidence="5 8 9">
    <location>
        <position position="108"/>
    </location>
    <ligand>
        <name>Mg(2+)</name>
        <dbReference type="ChEBI" id="CHEBI:18420"/>
        <label>1</label>
    </ligand>
</feature>
<feature type="binding site" evidence="5 8 9">
    <location>
        <position position="132"/>
    </location>
    <ligand>
        <name>dGMP</name>
        <dbReference type="ChEBI" id="CHEBI:57673"/>
    </ligand>
</feature>
<feature type="binding site" evidence="5 8 9">
    <location>
        <position position="139"/>
    </location>
    <ligand>
        <name>dGMP</name>
        <dbReference type="ChEBI" id="CHEBI:57673"/>
    </ligand>
</feature>
<feature type="binding site" evidence="5 8 9">
    <location>
        <position position="140"/>
    </location>
    <ligand>
        <name>dGMP</name>
        <dbReference type="ChEBI" id="CHEBI:57673"/>
    </ligand>
</feature>
<feature type="binding site" evidence="5 8 9">
    <location>
        <position position="144"/>
    </location>
    <ligand>
        <name>dGMP</name>
        <dbReference type="ChEBI" id="CHEBI:57673"/>
    </ligand>
</feature>
<feature type="binding site" evidence="5 8 9">
    <location>
        <position position="152"/>
    </location>
    <ligand>
        <name>dGMP</name>
        <dbReference type="ChEBI" id="CHEBI:57673"/>
    </ligand>
</feature>
<feature type="binding site" evidence="5 8 9">
    <location>
        <position position="175"/>
    </location>
    <ligand>
        <name>dGMP</name>
        <dbReference type="ChEBI" id="CHEBI:57673"/>
    </ligand>
</feature>
<feature type="binding site" evidence="5 8 9">
    <location>
        <position position="177"/>
    </location>
    <ligand>
        <name>dGMP</name>
        <dbReference type="ChEBI" id="CHEBI:57673"/>
    </ligand>
</feature>
<feature type="binding site" evidence="5 8 9">
    <location>
        <position position="178"/>
    </location>
    <ligand>
        <name>dGMP</name>
        <dbReference type="ChEBI" id="CHEBI:57673"/>
    </ligand>
</feature>
<feature type="binding site" evidence="5 8 9">
    <location>
        <position position="181"/>
    </location>
    <ligand>
        <name>dGMP</name>
        <dbReference type="ChEBI" id="CHEBI:57673"/>
    </ligand>
</feature>
<feature type="binding site" evidence="5 9">
    <location>
        <position position="208"/>
    </location>
    <ligand>
        <name>dGMP</name>
        <dbReference type="ChEBI" id="CHEBI:57673"/>
    </ligand>
</feature>
<feature type="strand" evidence="10">
    <location>
        <begin position="2"/>
        <end position="7"/>
    </location>
</feature>
<feature type="helix" evidence="10">
    <location>
        <begin position="14"/>
        <end position="24"/>
    </location>
</feature>
<feature type="strand" evidence="10">
    <location>
        <begin position="27"/>
        <end position="29"/>
    </location>
</feature>
<feature type="helix" evidence="10">
    <location>
        <begin position="34"/>
        <end position="47"/>
    </location>
</feature>
<feature type="turn" evidence="11">
    <location>
        <begin position="48"/>
        <end position="50"/>
    </location>
</feature>
<feature type="strand" evidence="10">
    <location>
        <begin position="51"/>
        <end position="53"/>
    </location>
</feature>
<feature type="helix" evidence="10">
    <location>
        <begin position="58"/>
        <end position="61"/>
    </location>
</feature>
<feature type="turn" evidence="10">
    <location>
        <begin position="62"/>
        <end position="65"/>
    </location>
</feature>
<feature type="helix" evidence="10">
    <location>
        <begin position="76"/>
        <end position="91"/>
    </location>
</feature>
<feature type="strand" evidence="10">
    <location>
        <begin position="101"/>
        <end position="106"/>
    </location>
</feature>
<feature type="strand" evidence="10">
    <location>
        <begin position="108"/>
        <end position="110"/>
    </location>
</feature>
<feature type="helix" evidence="10">
    <location>
        <begin position="112"/>
        <end position="123"/>
    </location>
</feature>
<feature type="helix" evidence="10">
    <location>
        <begin position="131"/>
        <end position="139"/>
    </location>
</feature>
<feature type="turn" evidence="10">
    <location>
        <begin position="140"/>
        <end position="142"/>
    </location>
</feature>
<feature type="helix" evidence="10">
    <location>
        <begin position="143"/>
        <end position="146"/>
    </location>
</feature>
<feature type="helix" evidence="10">
    <location>
        <begin position="151"/>
        <end position="163"/>
    </location>
</feature>
<feature type="strand" evidence="10">
    <location>
        <begin position="169"/>
        <end position="173"/>
    </location>
</feature>
<feature type="helix" evidence="10">
    <location>
        <begin position="179"/>
        <end position="187"/>
    </location>
</feature>
<feature type="strand" evidence="10">
    <location>
        <begin position="191"/>
        <end position="196"/>
    </location>
</feature>
<feature type="helix" evidence="10">
    <location>
        <begin position="207"/>
        <end position="209"/>
    </location>
</feature>
<feature type="strand" evidence="10">
    <location>
        <begin position="219"/>
        <end position="222"/>
    </location>
</feature>
<feature type="helix" evidence="10">
    <location>
        <begin position="227"/>
        <end position="239"/>
    </location>
</feature>
<accession>P04531</accession>
<sequence>MKLIFLSGVKRSGKDTTADFIMSNYSAVKYQLAGPIKDALAYAWGVFAANTDYPCLTRKEFEGIDYDRETNLNLTKLEVITIMEQAFCYLNGKSPIKGVFVFDDEGKESVNFVAFNKITDVINNIEDQWSVRRLMQALGTDLIVNNFDRMYWVKLFALDYLDKFNSGYDYYIVPDTRQDHEMDAARAMGATVIHVVRPGQKSNDTHITEAGLPIRDGDLVITNDGSLEELFSKIKNTLKVL</sequence>
<dbReference type="EC" id="2.7.4.-" evidence="3 4"/>
<dbReference type="EMBL" id="X03016">
    <property type="protein sequence ID" value="CAA26800.1"/>
    <property type="molecule type" value="Genomic_DNA"/>
</dbReference>
<dbReference type="EMBL" id="AF158101">
    <property type="protein sequence ID" value="AAD42414.1"/>
    <property type="molecule type" value="Genomic_DNA"/>
</dbReference>
<dbReference type="EMBL" id="X14845">
    <property type="protein sequence ID" value="CAA32953.1"/>
    <property type="molecule type" value="Genomic_DNA"/>
</dbReference>
<dbReference type="PIR" id="C92919">
    <property type="entry name" value="KIBPD4"/>
</dbReference>
<dbReference type="RefSeq" id="NP_049752.1">
    <property type="nucleotide sequence ID" value="NC_000866.4"/>
</dbReference>
<dbReference type="PDB" id="1DEK">
    <property type="method" value="X-ray"/>
    <property type="resolution" value="2.00 A"/>
    <property type="chains" value="A/B=1-241"/>
</dbReference>
<dbReference type="PDB" id="1DEL">
    <property type="method" value="X-ray"/>
    <property type="resolution" value="2.20 A"/>
    <property type="chains" value="A/B=1-241"/>
</dbReference>
<dbReference type="PDBsum" id="1DEK"/>
<dbReference type="PDBsum" id="1DEL"/>
<dbReference type="SMR" id="P04531"/>
<dbReference type="DrugBank" id="DB04457">
    <property type="generic name" value="2'-Deoxyguanosine-5'-Monophosphate"/>
</dbReference>
<dbReference type="DrugBank" id="DB03661">
    <property type="generic name" value="L-cysteic acid"/>
</dbReference>
<dbReference type="GeneID" id="1258557"/>
<dbReference type="KEGG" id="vg:1258557"/>
<dbReference type="OrthoDB" id="14006at10239"/>
<dbReference type="EvolutionaryTrace" id="P04531"/>
<dbReference type="Proteomes" id="UP000009087">
    <property type="component" value="Segment"/>
</dbReference>
<dbReference type="GO" id="GO:0005524">
    <property type="term" value="F:ATP binding"/>
    <property type="evidence" value="ECO:0007669"/>
    <property type="project" value="UniProtKB-KW"/>
</dbReference>
<dbReference type="GO" id="GO:0047507">
    <property type="term" value="F:deoxynucleoside-phosphate kinase activity, ATP as phosphate donor"/>
    <property type="evidence" value="ECO:0000314"/>
    <property type="project" value="UniProtKB"/>
</dbReference>
<dbReference type="GO" id="GO:0050316">
    <property type="term" value="F:dGMP kinase activity"/>
    <property type="evidence" value="ECO:0007669"/>
    <property type="project" value="RHEA"/>
</dbReference>
<dbReference type="GO" id="GO:0004798">
    <property type="term" value="F:dTMP kinase activity"/>
    <property type="evidence" value="ECO:0007669"/>
    <property type="project" value="RHEA"/>
</dbReference>
<dbReference type="Gene3D" id="1.10.238.70">
    <property type="match status" value="1"/>
</dbReference>
<dbReference type="Gene3D" id="3.40.50.300">
    <property type="entry name" value="P-loop containing nucleotide triphosphate hydrolases"/>
    <property type="match status" value="1"/>
</dbReference>
<dbReference type="InterPro" id="IPR048444">
    <property type="entry name" value="DNMK"/>
</dbReference>
<dbReference type="InterPro" id="IPR023191">
    <property type="entry name" value="DNMP_kinase_N"/>
</dbReference>
<dbReference type="InterPro" id="IPR027417">
    <property type="entry name" value="P-loop_NTPase"/>
</dbReference>
<dbReference type="Pfam" id="PF21448">
    <property type="entry name" value="DNMK"/>
    <property type="match status" value="1"/>
</dbReference>
<dbReference type="SUPFAM" id="SSF52540">
    <property type="entry name" value="P-loop containing nucleoside triphosphate hydrolases"/>
    <property type="match status" value="1"/>
</dbReference>
<organism>
    <name type="scientific">Enterobacteria phage T4</name>
    <name type="common">Bacteriophage T4</name>
    <dbReference type="NCBI Taxonomy" id="10665"/>
    <lineage>
        <taxon>Viruses</taxon>
        <taxon>Duplodnaviria</taxon>
        <taxon>Heunggongvirae</taxon>
        <taxon>Uroviricota</taxon>
        <taxon>Caudoviricetes</taxon>
        <taxon>Straboviridae</taxon>
        <taxon>Tevenvirinae</taxon>
        <taxon>Tequatrovirus</taxon>
    </lineage>
</organism>
<reference key="1">
    <citation type="journal article" date="1985" name="J. Mol. Biol.">
        <title>Sequence organization and control of transcription in the bacteriophage T4 tRNA region.</title>
        <authorList>
            <person name="Broida J."/>
            <person name="Abelson J."/>
        </authorList>
    </citation>
    <scope>NUCLEOTIDE SEQUENCE [GENOMIC DNA]</scope>
</reference>
<reference key="2">
    <citation type="journal article" date="2003" name="Microbiol. Mol. Biol. Rev.">
        <title>Bacteriophage T4 genome.</title>
        <authorList>
            <person name="Miller E.S."/>
            <person name="Kutter E."/>
            <person name="Mosig G."/>
            <person name="Arisaka F."/>
            <person name="Kunisawa T."/>
            <person name="Ruger W."/>
        </authorList>
    </citation>
    <scope>NUCLEOTIDE SEQUENCE [LARGE SCALE GENOMIC DNA]</scope>
</reference>
<reference key="3">
    <citation type="journal article" date="1982" name="Nucleic Acids Res.">
        <title>Nucleotide sequence of the bacteriophage T4 gene 57 and a deduced amino acid sequence.</title>
        <authorList>
            <person name="Herrmann R."/>
        </authorList>
    </citation>
    <scope>NUCLEOTIDE SEQUENCE [GENOMIC DNA] OF 148-241</scope>
</reference>
<reference key="4">
    <citation type="journal article" date="1989" name="Nucleic Acids Res.">
        <title>Sequencing, cloning and overexpression of genes of bacteriophage T4 between map positions 74.325 and 77.184.</title>
        <authorList>
            <person name="Koch T."/>
            <person name="Lamm N."/>
            <person name="Rueger W."/>
        </authorList>
    </citation>
    <scope>NUCLEOTIDE SEQUENCE [GENOMIC DNA] OF 1-27</scope>
</reference>
<reference key="5">
    <citation type="journal article" date="1993" name="J. Biol. Chem.">
        <title>Chemical modification of bacteriophage T4 deoxynucleotide kinase. Evidence of a single catalytic region.</title>
        <authorList>
            <person name="Brush G.S."/>
            <person name="Bessman M.J."/>
        </authorList>
    </citation>
    <scope>PROTEIN SEQUENCE OF 1-9</scope>
    <scope>ACTIVITY REGULATION</scope>
    <scope>CATALYTIC ACTIVITY</scope>
    <scope>BIOPHYSICOCHEMICAL PROPERTIES</scope>
    <scope>FUNCTION</scope>
</reference>
<reference key="6">
    <citation type="journal article" date="1967" name="J. Biol. Chem.">
        <title>The enzymology of virus-infected bacteria. X. A biochemical-genetic study of the deoxynucleotide kinase induced by wild type and amber mutants of phage T4.</title>
        <authorList>
            <person name="Duckworth D.H."/>
            <person name="Bessman M.J."/>
        </authorList>
    </citation>
    <scope>FUNCTION</scope>
    <scope>CATALYTIC ACTIVITY</scope>
    <scope>IDENTIFICATION</scope>
    <scope>BIOPHYSICOCHEMICAL PROPERTIES</scope>
</reference>
<reference key="7">
    <citation type="journal article" date="1973" name="J. Biol. Chem.">
        <title>Relationship between molecular weight of T4 phag-induced deoxynucleotide kinase and the size of its messenger ribonucleic acid.</title>
        <authorList>
            <person name="Sakiyama S."/>
            <person name="Buchanan J.M."/>
        </authorList>
    </citation>
    <scope>SUBUNIT</scope>
</reference>
<reference evidence="8 9" key="8">
    <citation type="journal article" date="1996" name="EMBO J.">
        <title>Crystal structure of bacteriophage T4 deoxynucleotide kinase with its substrates dGMP and ATP.</title>
        <authorList>
            <person name="Teplyakov A."/>
            <person name="Sebastiao P."/>
            <person name="Obmolova G."/>
            <person name="Perrakis A."/>
            <person name="Brush G.S."/>
            <person name="Bessman M.J."/>
            <person name="Wilson K.S."/>
        </authorList>
    </citation>
    <scope>X-RAY CRYSTALLOGRAPHY (2.0 ANGSTROMS) IN COMPLEX WITH DGMP AND AMP</scope>
    <scope>SUBUNIT</scope>
    <scope>COFACTOR</scope>
</reference>
<organismHost>
    <name type="scientific">Escherichia coli</name>
    <dbReference type="NCBI Taxonomy" id="562"/>
</organismHost>
<keyword id="KW-0002">3D-structure</keyword>
<keyword id="KW-0067">ATP-binding</keyword>
<keyword id="KW-0903">Direct protein sequencing</keyword>
<keyword id="KW-0235">DNA replication</keyword>
<keyword id="KW-0418">Kinase</keyword>
<keyword id="KW-0460">Magnesium</keyword>
<keyword id="KW-0479">Metal-binding</keyword>
<keyword id="KW-0547">Nucleotide-binding</keyword>
<keyword id="KW-1185">Reference proteome</keyword>
<keyword id="KW-0808">Transferase</keyword>
<keyword id="KW-1194">Viral DNA replication</keyword>
<evidence type="ECO:0000250" key="1">
    <source>
        <dbReference type="UniProtKB" id="Q6QGP4"/>
    </source>
</evidence>
<evidence type="ECO:0000269" key="2">
    <source>
    </source>
</evidence>
<evidence type="ECO:0000269" key="3">
    <source>
    </source>
</evidence>
<evidence type="ECO:0000269" key="4">
    <source>
    </source>
</evidence>
<evidence type="ECO:0000269" key="5">
    <source>
    </source>
</evidence>
<evidence type="ECO:0000305" key="6"/>
<evidence type="ECO:0000305" key="7">
    <source>
    </source>
</evidence>
<evidence type="ECO:0007744" key="8">
    <source>
        <dbReference type="PDB" id="1DEK"/>
    </source>
</evidence>
<evidence type="ECO:0007744" key="9">
    <source>
        <dbReference type="PDB" id="1DEL"/>
    </source>
</evidence>
<evidence type="ECO:0007829" key="10">
    <source>
        <dbReference type="PDB" id="1DEK"/>
    </source>
</evidence>
<evidence type="ECO:0007829" key="11">
    <source>
        <dbReference type="PDB" id="1DEL"/>
    </source>
</evidence>
<comment type="function">
    <text evidence="1 3 4">Allows the synthesis of deoxyribonucleoside triphosphates necessary for the rapid viral DNA replication (By similarity). Phosphorylates dGMP, dTMP and 5-hydroxymethyl-dCMP (hmdCMP) while excluding dCMP and dAMP (PubMed:5338507, PubMed:8380573). The phosphorylation of 5-hydroxymethyl-dCMP represents the first step in the replacement of cytosine by hydroxymethylcytosine in new viral DNA genomes (PubMed:5338507).</text>
</comment>
<comment type="catalytic activity">
    <reaction evidence="3 4">
        <text>dTMP + ATP = dTDP + ADP</text>
        <dbReference type="Rhea" id="RHEA:13517"/>
        <dbReference type="ChEBI" id="CHEBI:30616"/>
        <dbReference type="ChEBI" id="CHEBI:58369"/>
        <dbReference type="ChEBI" id="CHEBI:63528"/>
        <dbReference type="ChEBI" id="CHEBI:456216"/>
    </reaction>
    <physiologicalReaction direction="left-to-right" evidence="3 4">
        <dbReference type="Rhea" id="RHEA:13518"/>
    </physiologicalReaction>
</comment>
<comment type="catalytic activity">
    <reaction evidence="3 4">
        <text>dGMP + ATP = dGDP + ADP</text>
        <dbReference type="Rhea" id="RHEA:12697"/>
        <dbReference type="ChEBI" id="CHEBI:30616"/>
        <dbReference type="ChEBI" id="CHEBI:57673"/>
        <dbReference type="ChEBI" id="CHEBI:58595"/>
        <dbReference type="ChEBI" id="CHEBI:456216"/>
    </reaction>
    <physiologicalReaction direction="left-to-right" evidence="3 4">
        <dbReference type="Rhea" id="RHEA:12698"/>
    </physiologicalReaction>
</comment>
<comment type="catalytic activity">
    <reaction evidence="3 4">
        <text>5-hydroxymethyl-dCMP + ATP = 5-hydroxymethyl-dCDP + ADP</text>
        <dbReference type="Rhea" id="RHEA:62120"/>
        <dbReference type="ChEBI" id="CHEBI:30616"/>
        <dbReference type="ChEBI" id="CHEBI:57962"/>
        <dbReference type="ChEBI" id="CHEBI:145464"/>
        <dbReference type="ChEBI" id="CHEBI:456216"/>
    </reaction>
    <physiologicalReaction direction="left-to-right" evidence="3 4">
        <dbReference type="Rhea" id="RHEA:62121"/>
    </physiologicalReaction>
</comment>
<comment type="cofactor">
    <cofactor evidence="7">
        <name>Mg(2+)</name>
        <dbReference type="ChEBI" id="CHEBI:18420"/>
    </cofactor>
</comment>
<comment type="activity regulation">
    <text evidence="4">Inhibited by pyridoxal 5'-phosphate and diethylpyrocarbonate.</text>
</comment>
<comment type="biophysicochemical properties">
    <kinetics>
        <KM evidence="4">210 uM for dTMP</KM>
        <KM evidence="4">91 uM for dGMP</KM>
        <KM evidence="4">56 uM for hmdCMP</KM>
        <KM evidence="3">270 uM for dTMP</KM>
        <KM evidence="3">61 uM for dGMP</KM>
        <KM evidence="3">49 uM for hmdCMP</KM>
    </kinetics>
</comment>
<comment type="subunit">
    <text evidence="2 5">Homodimer.</text>
</comment>
<comment type="similarity">
    <text evidence="6">Belongs to the dNMP kinase family.</text>
</comment>
<name>DNMK_BPT4</name>
<protein>
    <recommendedName>
        <fullName>Deoxynucleotide monophosphate kinase</fullName>
        <shortName>DNK</shortName>
        <shortName>dNMP kinase</shortName>
        <ecNumber evidence="3 4">2.7.4.-</ecNumber>
    </recommendedName>
    <alternativeName>
        <fullName>Gp1</fullName>
    </alternativeName>
</protein>